<gene>
    <name evidence="1" type="primary">ubiG</name>
    <name type="ordered locus">PputGB1_1356</name>
</gene>
<proteinExistence type="inferred from homology"/>
<accession>B0KTX4</accession>
<protein>
    <recommendedName>
        <fullName evidence="1">Ubiquinone biosynthesis O-methyltransferase</fullName>
    </recommendedName>
    <alternativeName>
        <fullName evidence="1">2-polyprenyl-6-hydroxyphenol methylase</fullName>
        <ecNumber evidence="1">2.1.1.222</ecNumber>
    </alternativeName>
    <alternativeName>
        <fullName evidence="1">3-demethylubiquinone 3-O-methyltransferase</fullName>
        <ecNumber evidence="1">2.1.1.64</ecNumber>
    </alternativeName>
</protein>
<dbReference type="EC" id="2.1.1.222" evidence="1"/>
<dbReference type="EC" id="2.1.1.64" evidence="1"/>
<dbReference type="EMBL" id="CP000926">
    <property type="protein sequence ID" value="ABY97263.1"/>
    <property type="molecule type" value="Genomic_DNA"/>
</dbReference>
<dbReference type="RefSeq" id="WP_012271034.1">
    <property type="nucleotide sequence ID" value="NC_010322.1"/>
</dbReference>
<dbReference type="SMR" id="B0KTX4"/>
<dbReference type="KEGG" id="ppg:PputGB1_1356"/>
<dbReference type="eggNOG" id="COG2227">
    <property type="taxonomic scope" value="Bacteria"/>
</dbReference>
<dbReference type="HOGENOM" id="CLU_042432_5_0_6"/>
<dbReference type="UniPathway" id="UPA00232"/>
<dbReference type="Proteomes" id="UP000002157">
    <property type="component" value="Chromosome"/>
</dbReference>
<dbReference type="GO" id="GO:0102208">
    <property type="term" value="F:2-polyprenyl-6-hydroxyphenol methylase activity"/>
    <property type="evidence" value="ECO:0007669"/>
    <property type="project" value="UniProtKB-EC"/>
</dbReference>
<dbReference type="GO" id="GO:0061542">
    <property type="term" value="F:3-demethylubiquinol 3-O-methyltransferase activity"/>
    <property type="evidence" value="ECO:0007669"/>
    <property type="project" value="UniProtKB-UniRule"/>
</dbReference>
<dbReference type="GO" id="GO:0010420">
    <property type="term" value="F:polyprenyldihydroxybenzoate methyltransferase activity"/>
    <property type="evidence" value="ECO:0007669"/>
    <property type="project" value="InterPro"/>
</dbReference>
<dbReference type="GO" id="GO:0032259">
    <property type="term" value="P:methylation"/>
    <property type="evidence" value="ECO:0007669"/>
    <property type="project" value="UniProtKB-KW"/>
</dbReference>
<dbReference type="CDD" id="cd02440">
    <property type="entry name" value="AdoMet_MTases"/>
    <property type="match status" value="1"/>
</dbReference>
<dbReference type="FunFam" id="3.40.50.150:FF:000028">
    <property type="entry name" value="Ubiquinone biosynthesis O-methyltransferase"/>
    <property type="match status" value="1"/>
</dbReference>
<dbReference type="Gene3D" id="3.40.50.150">
    <property type="entry name" value="Vaccinia Virus protein VP39"/>
    <property type="match status" value="1"/>
</dbReference>
<dbReference type="HAMAP" id="MF_00472">
    <property type="entry name" value="UbiG"/>
    <property type="match status" value="1"/>
</dbReference>
<dbReference type="InterPro" id="IPR029063">
    <property type="entry name" value="SAM-dependent_MTases_sf"/>
</dbReference>
<dbReference type="InterPro" id="IPR010233">
    <property type="entry name" value="UbiG_MeTrfase"/>
</dbReference>
<dbReference type="NCBIfam" id="TIGR01983">
    <property type="entry name" value="UbiG"/>
    <property type="match status" value="1"/>
</dbReference>
<dbReference type="PANTHER" id="PTHR43464">
    <property type="entry name" value="METHYLTRANSFERASE"/>
    <property type="match status" value="1"/>
</dbReference>
<dbReference type="PANTHER" id="PTHR43464:SF19">
    <property type="entry name" value="UBIQUINONE BIOSYNTHESIS O-METHYLTRANSFERASE, MITOCHONDRIAL"/>
    <property type="match status" value="1"/>
</dbReference>
<dbReference type="Pfam" id="PF13489">
    <property type="entry name" value="Methyltransf_23"/>
    <property type="match status" value="1"/>
</dbReference>
<dbReference type="SUPFAM" id="SSF53335">
    <property type="entry name" value="S-adenosyl-L-methionine-dependent methyltransferases"/>
    <property type="match status" value="1"/>
</dbReference>
<comment type="function">
    <text evidence="1">O-methyltransferase that catalyzes the 2 O-methylation steps in the ubiquinone biosynthetic pathway.</text>
</comment>
<comment type="catalytic activity">
    <reaction evidence="1">
        <text>a 3-demethylubiquinol + S-adenosyl-L-methionine = a ubiquinol + S-adenosyl-L-homocysteine + H(+)</text>
        <dbReference type="Rhea" id="RHEA:44380"/>
        <dbReference type="Rhea" id="RHEA-COMP:9566"/>
        <dbReference type="Rhea" id="RHEA-COMP:10914"/>
        <dbReference type="ChEBI" id="CHEBI:15378"/>
        <dbReference type="ChEBI" id="CHEBI:17976"/>
        <dbReference type="ChEBI" id="CHEBI:57856"/>
        <dbReference type="ChEBI" id="CHEBI:59789"/>
        <dbReference type="ChEBI" id="CHEBI:84422"/>
        <dbReference type="EC" id="2.1.1.64"/>
    </reaction>
</comment>
<comment type="catalytic activity">
    <reaction evidence="1">
        <text>a 3-(all-trans-polyprenyl)benzene-1,2-diol + S-adenosyl-L-methionine = a 2-methoxy-6-(all-trans-polyprenyl)phenol + S-adenosyl-L-homocysteine + H(+)</text>
        <dbReference type="Rhea" id="RHEA:31411"/>
        <dbReference type="Rhea" id="RHEA-COMP:9550"/>
        <dbReference type="Rhea" id="RHEA-COMP:9551"/>
        <dbReference type="ChEBI" id="CHEBI:15378"/>
        <dbReference type="ChEBI" id="CHEBI:57856"/>
        <dbReference type="ChEBI" id="CHEBI:59789"/>
        <dbReference type="ChEBI" id="CHEBI:62729"/>
        <dbReference type="ChEBI" id="CHEBI:62731"/>
        <dbReference type="EC" id="2.1.1.222"/>
    </reaction>
</comment>
<comment type="pathway">
    <text evidence="1">Cofactor biosynthesis; ubiquinone biosynthesis.</text>
</comment>
<comment type="similarity">
    <text evidence="1">Belongs to the methyltransferase superfamily. UbiG/COQ3 family.</text>
</comment>
<keyword id="KW-0489">Methyltransferase</keyword>
<keyword id="KW-0949">S-adenosyl-L-methionine</keyword>
<keyword id="KW-0808">Transferase</keyword>
<keyword id="KW-0831">Ubiquinone biosynthesis</keyword>
<sequence length="232" mass="26056">MSNVDRAEIAKFEALAHRWWDRESEFKPLHEINPLRVNWIDERASLAGKKVLDVGCGGGILSEAMALRGATVTGIDMGEAPLAVAQLHQLESGVQVEYRQITAEALAEEMPEQFDVVTCLEMLEHVPDPSSVIRACYRMVKPGGQVFFSTINRNPKAYLLAIVGAEYILKMLPRGTHDFKKFIRPSELGAWSRDAGLQVKDIIGLTYNPLTKHYKLNSDVDVNYMIQTLREE</sequence>
<feature type="chain" id="PRO_1000081223" description="Ubiquinone biosynthesis O-methyltransferase">
    <location>
        <begin position="1"/>
        <end position="232"/>
    </location>
</feature>
<feature type="binding site" evidence="1">
    <location>
        <position position="36"/>
    </location>
    <ligand>
        <name>S-adenosyl-L-methionine</name>
        <dbReference type="ChEBI" id="CHEBI:59789"/>
    </ligand>
</feature>
<feature type="binding site" evidence="1">
    <location>
        <position position="55"/>
    </location>
    <ligand>
        <name>S-adenosyl-L-methionine</name>
        <dbReference type="ChEBI" id="CHEBI:59789"/>
    </ligand>
</feature>
<feature type="binding site" evidence="1">
    <location>
        <position position="76"/>
    </location>
    <ligand>
        <name>S-adenosyl-L-methionine</name>
        <dbReference type="ChEBI" id="CHEBI:59789"/>
    </ligand>
</feature>
<feature type="binding site" evidence="1">
    <location>
        <position position="120"/>
    </location>
    <ligand>
        <name>S-adenosyl-L-methionine</name>
        <dbReference type="ChEBI" id="CHEBI:59789"/>
    </ligand>
</feature>
<evidence type="ECO:0000255" key="1">
    <source>
        <dbReference type="HAMAP-Rule" id="MF_00472"/>
    </source>
</evidence>
<reference key="1">
    <citation type="submission" date="2008-01" db="EMBL/GenBank/DDBJ databases">
        <title>Complete sequence of Pseudomonas putida GB-1.</title>
        <authorList>
            <consortium name="US DOE Joint Genome Institute"/>
            <person name="Copeland A."/>
            <person name="Lucas S."/>
            <person name="Lapidus A."/>
            <person name="Barry K."/>
            <person name="Glavina del Rio T."/>
            <person name="Dalin E."/>
            <person name="Tice H."/>
            <person name="Pitluck S."/>
            <person name="Bruce D."/>
            <person name="Goodwin L."/>
            <person name="Chertkov O."/>
            <person name="Brettin T."/>
            <person name="Detter J.C."/>
            <person name="Han C."/>
            <person name="Kuske C.R."/>
            <person name="Schmutz J."/>
            <person name="Larimer F."/>
            <person name="Land M."/>
            <person name="Hauser L."/>
            <person name="Kyrpides N."/>
            <person name="Kim E."/>
            <person name="McCarthy J.K."/>
            <person name="Richardson P."/>
        </authorList>
    </citation>
    <scope>NUCLEOTIDE SEQUENCE [LARGE SCALE GENOMIC DNA]</scope>
    <source>
        <strain>GB-1</strain>
    </source>
</reference>
<organism>
    <name type="scientific">Pseudomonas putida (strain GB-1)</name>
    <dbReference type="NCBI Taxonomy" id="76869"/>
    <lineage>
        <taxon>Bacteria</taxon>
        <taxon>Pseudomonadati</taxon>
        <taxon>Pseudomonadota</taxon>
        <taxon>Gammaproteobacteria</taxon>
        <taxon>Pseudomonadales</taxon>
        <taxon>Pseudomonadaceae</taxon>
        <taxon>Pseudomonas</taxon>
    </lineage>
</organism>
<name>UBIG_PSEPG</name>